<keyword id="KW-0007">Acetylation</keyword>
<keyword id="KW-0090">Biological rhythms</keyword>
<keyword id="KW-0119">Carbohydrate metabolism</keyword>
<keyword id="KW-0131">Cell cycle</keyword>
<keyword id="KW-0132">Cell division</keyword>
<keyword id="KW-0963">Cytoplasm</keyword>
<keyword id="KW-0321">Glycogen metabolism</keyword>
<keyword id="KW-0378">Hydrolase</keyword>
<keyword id="KW-0464">Manganese</keyword>
<keyword id="KW-0479">Metal-binding</keyword>
<keyword id="KW-0539">Nucleus</keyword>
<keyword id="KW-0597">Phosphoprotein</keyword>
<keyword id="KW-0904">Protein phosphatase</keyword>
<keyword id="KW-1185">Reference proteome</keyword>
<proteinExistence type="evidence at transcript level"/>
<sequence>MADGELNVDSLITRLLEVRGCRPGKIVQMTEAEVRGLCIKSREIFLSQPILLELEAPLKICGDIHGQYTDLLRLFEYGGFPPEANYLFLGDYVDRGKQSLETICLLLAYKIKYPENFFLLRGNHECASINRIYGFYDECKRRFNIKLWKTFTDCFNCLPIAAIVDEKIFCCHGGLSPDLQSMEQIRRIMRPTDVPDTGLLCDLLWSDPDKDVQGWGENDRGVSFTFGADVVSKFLNRHDLDLICRAHQVVEDGYEFFAKRQLVTLFSAPNYCGEFDNAGGMMSVDETLMCSFQILKPSEKKAKYQYGGLNSGRPVTPPRTANPPKKR</sequence>
<protein>
    <recommendedName>
        <fullName>Serine/threonine-protein phosphatase PP1-beta catalytic subunit</fullName>
        <shortName>PP-1B</shortName>
        <ecNumber evidence="2">3.1.3.16</ecNumber>
        <ecNumber>3.1.3.53</ecNumber>
    </recommendedName>
</protein>
<comment type="function">
    <text evidence="2">Protein phosphatase that associates with over 200 regulatory proteins to form highly specific holoenzymes which dephosphorylate hundreds of biological targets. Protein phosphatase (PP1) is essential for cell division, it participates in the regulation of glycogen metabolism, muscle contractility and protein synthesis. Involved in regulation of ionic conductances and long-term synaptic plasticity. Component of the PTW/PP1 phosphatase complex, which plays a role in the control of chromatin structure and cell cycle progression during the transition from mitosis into interphase. In balance with CSNK1D and CSNK1E, determines the circadian period length, through the regulation of the speed and rhythmicity of PER1 and PER2 phosphorylation. May dephosphorylate CSNK1D and CSNK1E (By similarity). Core component of the SHOC2-MRAS-PP1c (SMP) holophosphatase complex that regulates the MAPK pathway activation (By similarity). The SMP complex specifically dephosphorylates the inhibitory phosphorylation at 'Ser-259' of RAF1 kinase, 'Ser-365' of BRAF kinase and 'Ser-214' of ARAF kinase, stimulating their kinase activities (By similarity). The SMP complex enhances the dephosphorylation activity and substrate specificity of PP1c (By similarity).</text>
</comment>
<comment type="catalytic activity">
    <reaction evidence="2">
        <text>O-phospho-L-seryl-[protein] + H2O = L-seryl-[protein] + phosphate</text>
        <dbReference type="Rhea" id="RHEA:20629"/>
        <dbReference type="Rhea" id="RHEA-COMP:9863"/>
        <dbReference type="Rhea" id="RHEA-COMP:11604"/>
        <dbReference type="ChEBI" id="CHEBI:15377"/>
        <dbReference type="ChEBI" id="CHEBI:29999"/>
        <dbReference type="ChEBI" id="CHEBI:43474"/>
        <dbReference type="ChEBI" id="CHEBI:83421"/>
        <dbReference type="EC" id="3.1.3.16"/>
    </reaction>
</comment>
<comment type="catalytic activity">
    <reaction>
        <text>O-phospho-L-threonyl-[protein] + H2O = L-threonyl-[protein] + phosphate</text>
        <dbReference type="Rhea" id="RHEA:47004"/>
        <dbReference type="Rhea" id="RHEA-COMP:11060"/>
        <dbReference type="Rhea" id="RHEA-COMP:11605"/>
        <dbReference type="ChEBI" id="CHEBI:15377"/>
        <dbReference type="ChEBI" id="CHEBI:30013"/>
        <dbReference type="ChEBI" id="CHEBI:43474"/>
        <dbReference type="ChEBI" id="CHEBI:61977"/>
        <dbReference type="EC" id="3.1.3.16"/>
    </reaction>
</comment>
<comment type="catalytic activity">
    <reaction>
        <text>O-phospho-L-seryl-[myosin light chain] + H2O = L-seryl-[myosin light chain] + phosphate</text>
        <dbReference type="Rhea" id="RHEA:12849"/>
        <dbReference type="Rhea" id="RHEA-COMP:13684"/>
        <dbReference type="Rhea" id="RHEA-COMP:13685"/>
        <dbReference type="ChEBI" id="CHEBI:15377"/>
        <dbReference type="ChEBI" id="CHEBI:29999"/>
        <dbReference type="ChEBI" id="CHEBI:43474"/>
        <dbReference type="ChEBI" id="CHEBI:83421"/>
        <dbReference type="EC" id="3.1.3.53"/>
    </reaction>
</comment>
<comment type="catalytic activity">
    <reaction>
        <text>O-phospho-L-threonyl-[myosin light chain] + H2O = L-threonyl-[myosin light chain] + phosphate</text>
        <dbReference type="Rhea" id="RHEA:53988"/>
        <dbReference type="Rhea" id="RHEA-COMP:13686"/>
        <dbReference type="Rhea" id="RHEA-COMP:13687"/>
        <dbReference type="ChEBI" id="CHEBI:15377"/>
        <dbReference type="ChEBI" id="CHEBI:30013"/>
        <dbReference type="ChEBI" id="CHEBI:43474"/>
        <dbReference type="ChEBI" id="CHEBI:61977"/>
        <dbReference type="EC" id="3.1.3.53"/>
    </reaction>
</comment>
<comment type="cofactor">
    <cofactor evidence="1">
        <name>Mn(2+)</name>
        <dbReference type="ChEBI" id="CHEBI:29035"/>
    </cofactor>
    <text evidence="1">Binds 2 manganese ions per subunit.</text>
</comment>
<comment type="activity regulation">
    <text evidence="1">Inhibited by the toxins okadaic acid, tautomycin and microcystin Leu-Arg. The phosphatase activity of the PPP1R15A-PP1 complex toward EIF2S1 is specifically inhibited by Salubrinal, a drug that protects cells from endoplasmic reticulum stress (By similarity).</text>
</comment>
<comment type="subunit">
    <text evidence="2 3">PP1 comprises a catalytic subunit, PPP1CA, PPP1CB or PPP1CC, which is folded into its native form by inhibitor 2 and glycogen synthetase kinase 3, and then complexed to one or several targeting or regulatory subunits. The targeting or regulatory subunits determine the substrate specificity of PP1. PPP1R12A, PPP1R12B and PPP1R12C mediate binding to myosin. PPP1R3A (in skeletal muscle), PPP1R3B (in liver), PPP1R3C, PPP1R3D and PPP1R3F (in brain) mediate binding to glycogen. PPP1R15A and PPP1R15B mediate binding to EIF2S1. Part of a complex containing PPP1R15B, PP1 and NCK1/2. Interacts with PPP1R7 and PPP1R12C. Interacts with PPP1R16B. Component of the PTW/PP1 phosphatase complex, composed of PPP1R10/PNUTS, TOX4, WDR82, and PPP1CA or PPP1CB or PPP1CC. Interacts with PPP1R8. Interacts with PPP1R12A and NUAK1; the interaction is direct. Interacts with TRIM28; the interaction is weak. Interacts with FOXP3. Interacts with RRP1B. Interacts with SERPINE1. Interacts with LZTR1 (By similarity). Component of the SHOC2-MRAS-PP1c (SMP) complex consisting of SHOC2, GTP-bound M-Ras/MRAS and the catalytic subunit of protein phosphatase 1 (either PPP1CA, PPP1CB or PPP1CC) (By similarity). SHOC2 and PP1c preferably bind M-Ras/MRAS, but they also bind K-Ras/KRAS, N-Ras/NRAS and H-Ras/HRAS; these interactions are GTP-dependent and both SHOC2 and PP1c are required to form a stable complex (By similarity). Interacts with SHOC2 in the absence of Ras GTPases (By similarity).</text>
</comment>
<comment type="subcellular location">
    <subcellularLocation>
        <location evidence="2">Cytoplasm</location>
    </subcellularLocation>
    <subcellularLocation>
        <location evidence="2">Nucleus</location>
    </subcellularLocation>
    <subcellularLocation>
        <location evidence="2">Nucleus</location>
        <location evidence="2">Nucleoplasm</location>
    </subcellularLocation>
    <subcellularLocation>
        <location evidence="2">Nucleus</location>
        <location evidence="2">Nucleolus</location>
    </subcellularLocation>
    <text evidence="2">Highly mobile in cells and can be relocalized through interaction with targeting subunits. In the presence of PPP1R8 relocalizes from the nucleus to nuclear speckles.</text>
</comment>
<comment type="similarity">
    <text evidence="5">Belongs to the PPP phosphatase family. PP-1 subfamily.</text>
</comment>
<comment type="online information" name="Protein Spotlight">
    <link uri="https://www.proteinspotlight.org/back_issues/032"/>
    <text>The things we forget - Issue 32 of March 2003</text>
</comment>
<organism>
    <name type="scientific">Bos taurus</name>
    <name type="common">Bovine</name>
    <dbReference type="NCBI Taxonomy" id="9913"/>
    <lineage>
        <taxon>Eukaryota</taxon>
        <taxon>Metazoa</taxon>
        <taxon>Chordata</taxon>
        <taxon>Craniata</taxon>
        <taxon>Vertebrata</taxon>
        <taxon>Euteleostomi</taxon>
        <taxon>Mammalia</taxon>
        <taxon>Eutheria</taxon>
        <taxon>Laurasiatheria</taxon>
        <taxon>Artiodactyla</taxon>
        <taxon>Ruminantia</taxon>
        <taxon>Pecora</taxon>
        <taxon>Bovidae</taxon>
        <taxon>Bovinae</taxon>
        <taxon>Bos</taxon>
    </lineage>
</organism>
<reference key="1">
    <citation type="submission" date="2005-09" db="EMBL/GenBank/DDBJ databases">
        <authorList>
            <consortium name="NIH - Mammalian Gene Collection (MGC) project"/>
        </authorList>
    </citation>
    <scope>NUCLEOTIDE SEQUENCE [LARGE SCALE MRNA]</scope>
    <source>
        <strain>Hereford</strain>
        <tissue>Ascending colon</tissue>
    </source>
</reference>
<gene>
    <name type="primary">PPP1CB</name>
</gene>
<dbReference type="EC" id="3.1.3.16" evidence="2"/>
<dbReference type="EC" id="3.1.3.53"/>
<dbReference type="EMBL" id="BC104628">
    <property type="protein sequence ID" value="AAI04629.1"/>
    <property type="molecule type" value="mRNA"/>
</dbReference>
<dbReference type="RefSeq" id="NP_001029825.1">
    <property type="nucleotide sequence ID" value="NM_001034653.1"/>
</dbReference>
<dbReference type="RefSeq" id="XP_024854751.1">
    <property type="nucleotide sequence ID" value="XM_024998983.2"/>
</dbReference>
<dbReference type="RefSeq" id="XP_024854752.1">
    <property type="nucleotide sequence ID" value="XM_024998984.2"/>
</dbReference>
<dbReference type="RefSeq" id="XP_024854753.1">
    <property type="nucleotide sequence ID" value="XM_024998985.2"/>
</dbReference>
<dbReference type="RefSeq" id="XP_024854754.1">
    <property type="nucleotide sequence ID" value="XM_024998986.2"/>
</dbReference>
<dbReference type="SMR" id="Q3SWW9"/>
<dbReference type="FunCoup" id="Q3SWW9">
    <property type="interactions" value="2851"/>
</dbReference>
<dbReference type="STRING" id="9913.ENSBTAP00000016514"/>
<dbReference type="PaxDb" id="9913-ENSBTAP00000016514"/>
<dbReference type="PeptideAtlas" id="Q3SWW9"/>
<dbReference type="Ensembl" id="ENSBTAT00000016514.6">
    <property type="protein sequence ID" value="ENSBTAP00000016514.6"/>
    <property type="gene ID" value="ENSBTAG00000012447.7"/>
</dbReference>
<dbReference type="GeneID" id="538829"/>
<dbReference type="KEGG" id="bta:538829"/>
<dbReference type="CTD" id="5500"/>
<dbReference type="VEuPathDB" id="HostDB:ENSBTAG00000012447"/>
<dbReference type="VGNC" id="VGNC:33220">
    <property type="gene designation" value="PPP1CB"/>
</dbReference>
<dbReference type="eggNOG" id="KOG0374">
    <property type="taxonomic scope" value="Eukaryota"/>
</dbReference>
<dbReference type="GeneTree" id="ENSGT00940000154644"/>
<dbReference type="InParanoid" id="Q3SWW9"/>
<dbReference type="OMA" id="TVQMSEN"/>
<dbReference type="OrthoDB" id="1930084at2759"/>
<dbReference type="Reactome" id="R-BTA-2565942">
    <property type="pathway name" value="Regulation of PLK1 Activity at G2/M Transition"/>
</dbReference>
<dbReference type="Reactome" id="R-BTA-5625740">
    <property type="pathway name" value="RHO GTPases activate PKNs"/>
</dbReference>
<dbReference type="Reactome" id="R-BTA-5627123">
    <property type="pathway name" value="RHO GTPases activate PAKs"/>
</dbReference>
<dbReference type="Reactome" id="R-BTA-5673000">
    <property type="pathway name" value="RAF activation"/>
</dbReference>
<dbReference type="CD-CODE" id="D7FE2080">
    <property type="entry name" value="Nucleolus"/>
</dbReference>
<dbReference type="Proteomes" id="UP000009136">
    <property type="component" value="Chromosome 11"/>
</dbReference>
<dbReference type="Bgee" id="ENSBTAG00000012447">
    <property type="expression patterns" value="Expressed in semitendinosus and 102 other cell types or tissues"/>
</dbReference>
<dbReference type="GO" id="GO:0005737">
    <property type="term" value="C:cytoplasm"/>
    <property type="evidence" value="ECO:0000318"/>
    <property type="project" value="GO_Central"/>
</dbReference>
<dbReference type="GO" id="GO:0005730">
    <property type="term" value="C:nucleolus"/>
    <property type="evidence" value="ECO:0007669"/>
    <property type="project" value="UniProtKB-SubCell"/>
</dbReference>
<dbReference type="GO" id="GO:0005654">
    <property type="term" value="C:nucleoplasm"/>
    <property type="evidence" value="ECO:0007669"/>
    <property type="project" value="UniProtKB-SubCell"/>
</dbReference>
<dbReference type="GO" id="GO:0005634">
    <property type="term" value="C:nucleus"/>
    <property type="evidence" value="ECO:0000318"/>
    <property type="project" value="GO_Central"/>
</dbReference>
<dbReference type="GO" id="GO:0072357">
    <property type="term" value="C:PTW/PP1 phosphatase complex"/>
    <property type="evidence" value="ECO:0000250"/>
    <property type="project" value="UniProtKB"/>
</dbReference>
<dbReference type="GO" id="GO:0046872">
    <property type="term" value="F:metal ion binding"/>
    <property type="evidence" value="ECO:0007669"/>
    <property type="project" value="UniProtKB-KW"/>
</dbReference>
<dbReference type="GO" id="GO:0017018">
    <property type="term" value="F:myosin phosphatase activity"/>
    <property type="evidence" value="ECO:0000250"/>
    <property type="project" value="UniProtKB"/>
</dbReference>
<dbReference type="GO" id="GO:0050115">
    <property type="term" value="F:myosin-light-chain-phosphatase activity"/>
    <property type="evidence" value="ECO:0000250"/>
    <property type="project" value="UniProtKB"/>
</dbReference>
<dbReference type="GO" id="GO:0016791">
    <property type="term" value="F:phosphatase activity"/>
    <property type="evidence" value="ECO:0000250"/>
    <property type="project" value="UniProtKB"/>
</dbReference>
<dbReference type="GO" id="GO:0004722">
    <property type="term" value="F:protein serine/threonine phosphatase activity"/>
    <property type="evidence" value="ECO:0000318"/>
    <property type="project" value="GO_Central"/>
</dbReference>
<dbReference type="GO" id="GO:0051301">
    <property type="term" value="P:cell division"/>
    <property type="evidence" value="ECO:0007669"/>
    <property type="project" value="UniProtKB-KW"/>
</dbReference>
<dbReference type="GO" id="GO:0032922">
    <property type="term" value="P:circadian regulation of gene expression"/>
    <property type="evidence" value="ECO:0000250"/>
    <property type="project" value="UniProtKB"/>
</dbReference>
<dbReference type="GO" id="GO:0043153">
    <property type="term" value="P:entrainment of circadian clock by photoperiod"/>
    <property type="evidence" value="ECO:0000250"/>
    <property type="project" value="UniProtKB"/>
</dbReference>
<dbReference type="GO" id="GO:0005977">
    <property type="term" value="P:glycogen metabolic process"/>
    <property type="evidence" value="ECO:0007669"/>
    <property type="project" value="UniProtKB-KW"/>
</dbReference>
<dbReference type="GO" id="GO:0006470">
    <property type="term" value="P:protein dephosphorylation"/>
    <property type="evidence" value="ECO:0000250"/>
    <property type="project" value="UniProtKB"/>
</dbReference>
<dbReference type="GO" id="GO:0030155">
    <property type="term" value="P:regulation of cell adhesion"/>
    <property type="evidence" value="ECO:0000250"/>
    <property type="project" value="UniProtKB"/>
</dbReference>
<dbReference type="GO" id="GO:0042752">
    <property type="term" value="P:regulation of circadian rhythm"/>
    <property type="evidence" value="ECO:0000250"/>
    <property type="project" value="UniProtKB"/>
</dbReference>
<dbReference type="CDD" id="cd07414">
    <property type="entry name" value="MPP_PP1_PPKL"/>
    <property type="match status" value="1"/>
</dbReference>
<dbReference type="FunFam" id="3.60.21.10:FF:000007">
    <property type="entry name" value="Serine/threonine-protein phosphatase"/>
    <property type="match status" value="1"/>
</dbReference>
<dbReference type="Gene3D" id="3.60.21.10">
    <property type="match status" value="1"/>
</dbReference>
<dbReference type="InterPro" id="IPR004843">
    <property type="entry name" value="Calcineurin-like_PHP_ApaH"/>
</dbReference>
<dbReference type="InterPro" id="IPR029052">
    <property type="entry name" value="Metallo-depent_PP-like"/>
</dbReference>
<dbReference type="InterPro" id="IPR050341">
    <property type="entry name" value="PP1_catalytic_subunit"/>
</dbReference>
<dbReference type="InterPro" id="IPR006186">
    <property type="entry name" value="Ser/Thr-sp_prot-phosphatase"/>
</dbReference>
<dbReference type="InterPro" id="IPR031675">
    <property type="entry name" value="STPPase_N"/>
</dbReference>
<dbReference type="PANTHER" id="PTHR11668">
    <property type="entry name" value="SERINE/THREONINE PROTEIN PHOSPHATASE"/>
    <property type="match status" value="1"/>
</dbReference>
<dbReference type="PANTHER" id="PTHR11668:SF472">
    <property type="entry name" value="SERINE_THREONINE-PROTEIN PHOSPHATASE PP1-BETA CATALYTIC SUBUNIT"/>
    <property type="match status" value="1"/>
</dbReference>
<dbReference type="Pfam" id="PF00149">
    <property type="entry name" value="Metallophos"/>
    <property type="match status" value="1"/>
</dbReference>
<dbReference type="Pfam" id="PF16891">
    <property type="entry name" value="STPPase_N"/>
    <property type="match status" value="1"/>
</dbReference>
<dbReference type="PRINTS" id="PR00114">
    <property type="entry name" value="STPHPHTASE"/>
</dbReference>
<dbReference type="SMART" id="SM00156">
    <property type="entry name" value="PP2Ac"/>
    <property type="match status" value="1"/>
</dbReference>
<dbReference type="SUPFAM" id="SSF56300">
    <property type="entry name" value="Metallo-dependent phosphatases"/>
    <property type="match status" value="1"/>
</dbReference>
<dbReference type="PROSITE" id="PS00125">
    <property type="entry name" value="SER_THR_PHOSPHATASE"/>
    <property type="match status" value="1"/>
</dbReference>
<accession>Q3SWW9</accession>
<evidence type="ECO:0000250" key="1"/>
<evidence type="ECO:0000250" key="2">
    <source>
        <dbReference type="UniProtKB" id="P62140"/>
    </source>
</evidence>
<evidence type="ECO:0000250" key="3">
    <source>
        <dbReference type="UniProtKB" id="P62141"/>
    </source>
</evidence>
<evidence type="ECO:0000256" key="4">
    <source>
        <dbReference type="SAM" id="MobiDB-lite"/>
    </source>
</evidence>
<evidence type="ECO:0000305" key="5"/>
<name>PP1B_BOVIN</name>
<feature type="initiator methionine" description="Removed" evidence="2">
    <location>
        <position position="1"/>
    </location>
</feature>
<feature type="chain" id="PRO_0000283052" description="Serine/threonine-protein phosphatase PP1-beta catalytic subunit">
    <location>
        <begin position="2"/>
        <end position="327"/>
    </location>
</feature>
<feature type="region of interest" description="Disordered" evidence="4">
    <location>
        <begin position="305"/>
        <end position="327"/>
    </location>
</feature>
<feature type="active site" description="Proton donor" evidence="1">
    <location>
        <position position="124"/>
    </location>
</feature>
<feature type="binding site" evidence="1">
    <location>
        <position position="63"/>
    </location>
    <ligand>
        <name>Mn(2+)</name>
        <dbReference type="ChEBI" id="CHEBI:29035"/>
        <label>1</label>
    </ligand>
</feature>
<feature type="binding site" evidence="1">
    <location>
        <position position="65"/>
    </location>
    <ligand>
        <name>Mn(2+)</name>
        <dbReference type="ChEBI" id="CHEBI:29035"/>
        <label>1</label>
    </ligand>
</feature>
<feature type="binding site" evidence="1">
    <location>
        <position position="91"/>
    </location>
    <ligand>
        <name>Mn(2+)</name>
        <dbReference type="ChEBI" id="CHEBI:29035"/>
        <label>1</label>
    </ligand>
</feature>
<feature type="binding site" evidence="1">
    <location>
        <position position="91"/>
    </location>
    <ligand>
        <name>Mn(2+)</name>
        <dbReference type="ChEBI" id="CHEBI:29035"/>
        <label>2</label>
    </ligand>
</feature>
<feature type="binding site" evidence="1">
    <location>
        <position position="123"/>
    </location>
    <ligand>
        <name>Mn(2+)</name>
        <dbReference type="ChEBI" id="CHEBI:29035"/>
        <label>2</label>
    </ligand>
</feature>
<feature type="binding site" evidence="1">
    <location>
        <position position="172"/>
    </location>
    <ligand>
        <name>Mn(2+)</name>
        <dbReference type="ChEBI" id="CHEBI:29035"/>
        <label>2</label>
    </ligand>
</feature>
<feature type="binding site" evidence="1">
    <location>
        <position position="247"/>
    </location>
    <ligand>
        <name>Mn(2+)</name>
        <dbReference type="ChEBI" id="CHEBI:29035"/>
        <label>2</label>
    </ligand>
</feature>
<feature type="modified residue" description="N-acetylalanine" evidence="2">
    <location>
        <position position="2"/>
    </location>
</feature>
<feature type="modified residue" description="Phosphothreonine" evidence="2">
    <location>
        <position position="316"/>
    </location>
</feature>